<gene>
    <name evidence="1" type="primary">rplR</name>
    <name type="ordered locus">CC_1264</name>
</gene>
<dbReference type="EMBL" id="AE005673">
    <property type="protein sequence ID" value="AAK23245.1"/>
    <property type="molecule type" value="Genomic_DNA"/>
</dbReference>
<dbReference type="PIR" id="A87406">
    <property type="entry name" value="A87406"/>
</dbReference>
<dbReference type="RefSeq" id="NP_420077.1">
    <property type="nucleotide sequence ID" value="NC_002696.2"/>
</dbReference>
<dbReference type="RefSeq" id="WP_010919143.1">
    <property type="nucleotide sequence ID" value="NC_002696.2"/>
</dbReference>
<dbReference type="SMR" id="Q9A8T7"/>
<dbReference type="STRING" id="190650.CC_1264"/>
<dbReference type="EnsemblBacteria" id="AAK23245">
    <property type="protein sequence ID" value="AAK23245"/>
    <property type="gene ID" value="CC_1264"/>
</dbReference>
<dbReference type="KEGG" id="ccr:CC_1264"/>
<dbReference type="PATRIC" id="fig|190650.5.peg.1289"/>
<dbReference type="eggNOG" id="COG0256">
    <property type="taxonomic scope" value="Bacteria"/>
</dbReference>
<dbReference type="HOGENOM" id="CLU_098841_0_1_5"/>
<dbReference type="BioCyc" id="CAULO:CC1264-MONOMER"/>
<dbReference type="Proteomes" id="UP000001816">
    <property type="component" value="Chromosome"/>
</dbReference>
<dbReference type="GO" id="GO:0022625">
    <property type="term" value="C:cytosolic large ribosomal subunit"/>
    <property type="evidence" value="ECO:0007669"/>
    <property type="project" value="TreeGrafter"/>
</dbReference>
<dbReference type="GO" id="GO:0008097">
    <property type="term" value="F:5S rRNA binding"/>
    <property type="evidence" value="ECO:0007669"/>
    <property type="project" value="TreeGrafter"/>
</dbReference>
<dbReference type="GO" id="GO:0003735">
    <property type="term" value="F:structural constituent of ribosome"/>
    <property type="evidence" value="ECO:0007669"/>
    <property type="project" value="InterPro"/>
</dbReference>
<dbReference type="GO" id="GO:0006412">
    <property type="term" value="P:translation"/>
    <property type="evidence" value="ECO:0007669"/>
    <property type="project" value="UniProtKB-UniRule"/>
</dbReference>
<dbReference type="CDD" id="cd00432">
    <property type="entry name" value="Ribosomal_L18_L5e"/>
    <property type="match status" value="1"/>
</dbReference>
<dbReference type="FunFam" id="3.30.420.100:FF:000001">
    <property type="entry name" value="50S ribosomal protein L18"/>
    <property type="match status" value="1"/>
</dbReference>
<dbReference type="Gene3D" id="3.30.420.100">
    <property type="match status" value="1"/>
</dbReference>
<dbReference type="HAMAP" id="MF_01337_B">
    <property type="entry name" value="Ribosomal_uL18_B"/>
    <property type="match status" value="1"/>
</dbReference>
<dbReference type="InterPro" id="IPR004389">
    <property type="entry name" value="Ribosomal_uL18_bac-type"/>
</dbReference>
<dbReference type="InterPro" id="IPR005484">
    <property type="entry name" value="Ribosomal_uL18_bac/euk"/>
</dbReference>
<dbReference type="NCBIfam" id="TIGR00060">
    <property type="entry name" value="L18_bact"/>
    <property type="match status" value="1"/>
</dbReference>
<dbReference type="PANTHER" id="PTHR12899">
    <property type="entry name" value="39S RIBOSOMAL PROTEIN L18, MITOCHONDRIAL"/>
    <property type="match status" value="1"/>
</dbReference>
<dbReference type="PANTHER" id="PTHR12899:SF3">
    <property type="entry name" value="LARGE RIBOSOMAL SUBUNIT PROTEIN UL18M"/>
    <property type="match status" value="1"/>
</dbReference>
<dbReference type="Pfam" id="PF00861">
    <property type="entry name" value="Ribosomal_L18p"/>
    <property type="match status" value="1"/>
</dbReference>
<dbReference type="SUPFAM" id="SSF53137">
    <property type="entry name" value="Translational machinery components"/>
    <property type="match status" value="1"/>
</dbReference>
<name>RL18_CAUVC</name>
<organism>
    <name type="scientific">Caulobacter vibrioides (strain ATCC 19089 / CIP 103742 / CB 15)</name>
    <name type="common">Caulobacter crescentus</name>
    <dbReference type="NCBI Taxonomy" id="190650"/>
    <lineage>
        <taxon>Bacteria</taxon>
        <taxon>Pseudomonadati</taxon>
        <taxon>Pseudomonadota</taxon>
        <taxon>Alphaproteobacteria</taxon>
        <taxon>Caulobacterales</taxon>
        <taxon>Caulobacteraceae</taxon>
        <taxon>Caulobacter</taxon>
    </lineage>
</organism>
<keyword id="KW-1185">Reference proteome</keyword>
<keyword id="KW-0687">Ribonucleoprotein</keyword>
<keyword id="KW-0689">Ribosomal protein</keyword>
<keyword id="KW-0694">RNA-binding</keyword>
<keyword id="KW-0699">rRNA-binding</keyword>
<sequence length="116" mass="12443">MALSPRESAAKRAQRVRTRLKSLANGRPRLSVFRSSKNIYAQVIDDERGVTLASASTLEAEGKGADKDAAAAVGKLVAERAIEKGVKDVVFDRGSYIFHGRVKALADAAREAGLNF</sequence>
<accession>Q9A8T7</accession>
<protein>
    <recommendedName>
        <fullName evidence="1">Large ribosomal subunit protein uL18</fullName>
    </recommendedName>
    <alternativeName>
        <fullName evidence="2">50S ribosomal protein L18</fullName>
    </alternativeName>
</protein>
<proteinExistence type="inferred from homology"/>
<feature type="chain" id="PRO_0000131240" description="Large ribosomal subunit protein uL18">
    <location>
        <begin position="1"/>
        <end position="116"/>
    </location>
</feature>
<reference key="1">
    <citation type="journal article" date="2001" name="Proc. Natl. Acad. Sci. U.S.A.">
        <title>Complete genome sequence of Caulobacter crescentus.</title>
        <authorList>
            <person name="Nierman W.C."/>
            <person name="Feldblyum T.V."/>
            <person name="Laub M.T."/>
            <person name="Paulsen I.T."/>
            <person name="Nelson K.E."/>
            <person name="Eisen J.A."/>
            <person name="Heidelberg J.F."/>
            <person name="Alley M.R.K."/>
            <person name="Ohta N."/>
            <person name="Maddock J.R."/>
            <person name="Potocka I."/>
            <person name="Nelson W.C."/>
            <person name="Newton A."/>
            <person name="Stephens C."/>
            <person name="Phadke N.D."/>
            <person name="Ely B."/>
            <person name="DeBoy R.T."/>
            <person name="Dodson R.J."/>
            <person name="Durkin A.S."/>
            <person name="Gwinn M.L."/>
            <person name="Haft D.H."/>
            <person name="Kolonay J.F."/>
            <person name="Smit J."/>
            <person name="Craven M.B."/>
            <person name="Khouri H.M."/>
            <person name="Shetty J."/>
            <person name="Berry K.J."/>
            <person name="Utterback T.R."/>
            <person name="Tran K."/>
            <person name="Wolf A.M."/>
            <person name="Vamathevan J.J."/>
            <person name="Ermolaeva M.D."/>
            <person name="White O."/>
            <person name="Salzberg S.L."/>
            <person name="Venter J.C."/>
            <person name="Shapiro L."/>
            <person name="Fraser C.M."/>
        </authorList>
    </citation>
    <scope>NUCLEOTIDE SEQUENCE [LARGE SCALE GENOMIC DNA]</scope>
    <source>
        <strain>ATCC 19089 / CIP 103742 / CB 15</strain>
    </source>
</reference>
<evidence type="ECO:0000255" key="1">
    <source>
        <dbReference type="HAMAP-Rule" id="MF_01337"/>
    </source>
</evidence>
<evidence type="ECO:0000305" key="2"/>
<comment type="function">
    <text evidence="1">This is one of the proteins that bind and probably mediate the attachment of the 5S RNA into the large ribosomal subunit, where it forms part of the central protuberance.</text>
</comment>
<comment type="subunit">
    <text evidence="1">Part of the 50S ribosomal subunit; part of the 5S rRNA/L5/L18/L25 subcomplex. Contacts the 5S and 23S rRNAs.</text>
</comment>
<comment type="similarity">
    <text evidence="1">Belongs to the universal ribosomal protein uL18 family.</text>
</comment>